<proteinExistence type="inferred from homology"/>
<geneLocation type="chloroplast"/>
<evidence type="ECO:0000255" key="1">
    <source>
        <dbReference type="HAMAP-Rule" id="MF_01496"/>
    </source>
</evidence>
<keyword id="KW-0007">Acetylation</keyword>
<keyword id="KW-0148">Chlorophyll</keyword>
<keyword id="KW-0150">Chloroplast</keyword>
<keyword id="KW-0157">Chromophore</keyword>
<keyword id="KW-0464">Manganese</keyword>
<keyword id="KW-0472">Membrane</keyword>
<keyword id="KW-0479">Metal-binding</keyword>
<keyword id="KW-0597">Phosphoprotein</keyword>
<keyword id="KW-0602">Photosynthesis</keyword>
<keyword id="KW-0604">Photosystem II</keyword>
<keyword id="KW-0934">Plastid</keyword>
<keyword id="KW-0793">Thylakoid</keyword>
<keyword id="KW-0812">Transmembrane</keyword>
<keyword id="KW-1133">Transmembrane helix</keyword>
<protein>
    <recommendedName>
        <fullName evidence="1">Photosystem II CP43 reaction center protein</fullName>
    </recommendedName>
    <alternativeName>
        <fullName evidence="1">PSII 43 kDa protein</fullName>
    </alternativeName>
    <alternativeName>
        <fullName evidence="1">Protein CP-43</fullName>
    </alternativeName>
</protein>
<name>PSBC_PIPCE</name>
<accession>Q06GR4</accession>
<feature type="propeptide" id="PRO_0000431196" evidence="1">
    <location>
        <begin position="1"/>
        <end position="14"/>
    </location>
</feature>
<feature type="chain" id="PRO_0000361474" description="Photosystem II CP43 reaction center protein" evidence="1">
    <location>
        <begin position="15"/>
        <end position="473"/>
    </location>
</feature>
<feature type="transmembrane region" description="Helical" evidence="1">
    <location>
        <begin position="69"/>
        <end position="93"/>
    </location>
</feature>
<feature type="transmembrane region" description="Helical" evidence="1">
    <location>
        <begin position="134"/>
        <end position="155"/>
    </location>
</feature>
<feature type="transmembrane region" description="Helical" evidence="1">
    <location>
        <begin position="178"/>
        <end position="200"/>
    </location>
</feature>
<feature type="transmembrane region" description="Helical" evidence="1">
    <location>
        <begin position="255"/>
        <end position="275"/>
    </location>
</feature>
<feature type="transmembrane region" description="Helical" evidence="1">
    <location>
        <begin position="291"/>
        <end position="312"/>
    </location>
</feature>
<feature type="transmembrane region" description="Helical" evidence="1">
    <location>
        <begin position="447"/>
        <end position="471"/>
    </location>
</feature>
<feature type="binding site" evidence="1">
    <location>
        <position position="367"/>
    </location>
    <ligand>
        <name>[CaMn4O5] cluster</name>
        <dbReference type="ChEBI" id="CHEBI:189552"/>
    </ligand>
</feature>
<feature type="modified residue" description="N-acetylthreonine" evidence="1">
    <location>
        <position position="15"/>
    </location>
</feature>
<feature type="modified residue" description="Phosphothreonine" evidence="1">
    <location>
        <position position="15"/>
    </location>
</feature>
<reference key="1">
    <citation type="journal article" date="2006" name="BMC Evol. Biol.">
        <title>Complete plastid genome sequences of Drimys, Liriodendron, and Piper: implications for the phylogenetic relationships of magnoliids.</title>
        <authorList>
            <person name="Cai Z."/>
            <person name="Penaflor C."/>
            <person name="Kuehl J.V."/>
            <person name="Leebens-Mack J."/>
            <person name="Carlson J.E."/>
            <person name="dePamphilis C.W."/>
            <person name="Boore J.L."/>
            <person name="Jansen R.K."/>
        </authorList>
    </citation>
    <scope>NUCLEOTIDE SEQUENCE [LARGE SCALE GENOMIC DNA]</scope>
</reference>
<dbReference type="EMBL" id="DQ887677">
    <property type="protein sequence ID" value="ABI14468.1"/>
    <property type="molecule type" value="Genomic_DNA"/>
</dbReference>
<dbReference type="RefSeq" id="YP_784469.1">
    <property type="nucleotide sequence ID" value="NC_008457.1"/>
</dbReference>
<dbReference type="SMR" id="Q06GR4"/>
<dbReference type="GeneID" id="4363729"/>
<dbReference type="GO" id="GO:0009535">
    <property type="term" value="C:chloroplast thylakoid membrane"/>
    <property type="evidence" value="ECO:0007669"/>
    <property type="project" value="UniProtKB-SubCell"/>
</dbReference>
<dbReference type="GO" id="GO:0009523">
    <property type="term" value="C:photosystem II"/>
    <property type="evidence" value="ECO:0007669"/>
    <property type="project" value="UniProtKB-KW"/>
</dbReference>
<dbReference type="GO" id="GO:0016168">
    <property type="term" value="F:chlorophyll binding"/>
    <property type="evidence" value="ECO:0007669"/>
    <property type="project" value="UniProtKB-UniRule"/>
</dbReference>
<dbReference type="GO" id="GO:0045156">
    <property type="term" value="F:electron transporter, transferring electrons within the cyclic electron transport pathway of photosynthesis activity"/>
    <property type="evidence" value="ECO:0007669"/>
    <property type="project" value="InterPro"/>
</dbReference>
<dbReference type="GO" id="GO:0046872">
    <property type="term" value="F:metal ion binding"/>
    <property type="evidence" value="ECO:0007669"/>
    <property type="project" value="UniProtKB-KW"/>
</dbReference>
<dbReference type="GO" id="GO:0009772">
    <property type="term" value="P:photosynthetic electron transport in photosystem II"/>
    <property type="evidence" value="ECO:0007669"/>
    <property type="project" value="InterPro"/>
</dbReference>
<dbReference type="FunFam" id="1.10.10.670:FF:000001">
    <property type="entry name" value="Photosystem II CP43 reaction center protein"/>
    <property type="match status" value="1"/>
</dbReference>
<dbReference type="Gene3D" id="1.10.10.670">
    <property type="entry name" value="photosystem ii from thermosynechococcus elongatus"/>
    <property type="match status" value="1"/>
</dbReference>
<dbReference type="HAMAP" id="MF_01496">
    <property type="entry name" value="PSII_PsbC_CP43"/>
    <property type="match status" value="1"/>
</dbReference>
<dbReference type="InterPro" id="IPR000932">
    <property type="entry name" value="PS_antenna-like"/>
</dbReference>
<dbReference type="InterPro" id="IPR036001">
    <property type="entry name" value="PS_II_antenna-like_sf"/>
</dbReference>
<dbReference type="InterPro" id="IPR005869">
    <property type="entry name" value="PSII_PsbC"/>
</dbReference>
<dbReference type="InterPro" id="IPR044900">
    <property type="entry name" value="PSII_PsbC_sf"/>
</dbReference>
<dbReference type="NCBIfam" id="TIGR01153">
    <property type="entry name" value="psbC"/>
    <property type="match status" value="1"/>
</dbReference>
<dbReference type="Pfam" id="PF00421">
    <property type="entry name" value="PSII"/>
    <property type="match status" value="1"/>
</dbReference>
<dbReference type="SUPFAM" id="SSF161077">
    <property type="entry name" value="Photosystem II antenna protein-like"/>
    <property type="match status" value="1"/>
</dbReference>
<gene>
    <name evidence="1" type="primary">psbC</name>
</gene>
<organism>
    <name type="scientific">Piper cenocladum</name>
    <name type="common">Ant piper</name>
    <dbReference type="NCBI Taxonomy" id="398741"/>
    <lineage>
        <taxon>Eukaryota</taxon>
        <taxon>Viridiplantae</taxon>
        <taxon>Streptophyta</taxon>
        <taxon>Embryophyta</taxon>
        <taxon>Tracheophyta</taxon>
        <taxon>Spermatophyta</taxon>
        <taxon>Magnoliopsida</taxon>
        <taxon>Magnoliidae</taxon>
        <taxon>Piperales</taxon>
        <taxon>Piperaceae</taxon>
        <taxon>Piper</taxon>
    </lineage>
</organism>
<comment type="function">
    <text evidence="1">One of the components of the core complex of photosystem II (PSII). It binds chlorophyll and helps catalyze the primary light-induced photochemical processes of PSII. PSII is a light-driven water:plastoquinone oxidoreductase, using light energy to abstract electrons from H(2)O, generating O(2) and a proton gradient subsequently used for ATP formation.</text>
</comment>
<comment type="cofactor">
    <text evidence="1">Binds multiple chlorophylls and provides some of the ligands for the Ca-4Mn-5O cluster of the oxygen-evolving complex. It may also provide a ligand for a Cl- that is required for oxygen evolution. PSII binds additional chlorophylls, carotenoids and specific lipids.</text>
</comment>
<comment type="subunit">
    <text evidence="1">PSII is composed of 1 copy each of membrane proteins PsbA, PsbB, PsbC, PsbD, PsbE, PsbF, PsbH, PsbI, PsbJ, PsbK, PsbL, PsbM, PsbT, PsbX, PsbY, PsbZ, Psb30/Ycf12, at least 3 peripheral proteins of the oxygen-evolving complex and a large number of cofactors. It forms dimeric complexes.</text>
</comment>
<comment type="subcellular location">
    <subcellularLocation>
        <location evidence="1">Plastid</location>
        <location evidence="1">Chloroplast thylakoid membrane</location>
        <topology evidence="1">Multi-pass membrane protein</topology>
    </subcellularLocation>
</comment>
<comment type="similarity">
    <text evidence="1">Belongs to the PsbB/PsbC family. PsbC subfamily.</text>
</comment>
<sequence length="473" mass="51874">MKTLYSLRRFYPVETLFNGTLALTGRDQETTGFAWWAGNARLINLSGKLLGAHVAHAGLIVFWAGAMNLFEVAHFVPEKPMYEQGLILLPHLATLGWGVGPGGEVIDTFPYFVSGVLHLISSAVLGFGGIYHALLGPETLEESFPFFGYVWKDRNKMTTILGIHLILLGIGAFLLVFKALYFGGVYDTWAPGGGDVRKITNLTLSPSVIFGYLLKSPFGGEGWIVSVDDLEDIIGGHVWLGSICILGGIWHILTKPFAWARRAFVWSGEAYLSYSLGALAIFGFVACCFVWFNNTAYPSEFYGPTGPEASQAQAFTFLVRDQRLGANVGSAQGPTGLGKYLMRSPTGEVIFGGETMRFWDLRAPWLEPLRGPNGLDLGRLKKDIQPWQERRSAEYMTHAPLGSLNSVGGVATEINAVNYVSPRSWLATSHFVLGFFFFVGHLWHAGRARAAAAGFEKGIDRDFEPVLSMTPLN</sequence>